<gene>
    <name evidence="1" type="primary">bpt</name>
    <name type="ordered locus">RPE_3011</name>
</gene>
<dbReference type="EC" id="2.3.2.29" evidence="1"/>
<dbReference type="EMBL" id="CP000463">
    <property type="protein sequence ID" value="ABJ06948.1"/>
    <property type="molecule type" value="Genomic_DNA"/>
</dbReference>
<dbReference type="SMR" id="Q07M86"/>
<dbReference type="STRING" id="316055.RPE_3011"/>
<dbReference type="KEGG" id="rpe:RPE_3011"/>
<dbReference type="eggNOG" id="COG2935">
    <property type="taxonomic scope" value="Bacteria"/>
</dbReference>
<dbReference type="HOGENOM" id="CLU_077607_1_0_5"/>
<dbReference type="OrthoDB" id="9782022at2"/>
<dbReference type="GO" id="GO:0005737">
    <property type="term" value="C:cytoplasm"/>
    <property type="evidence" value="ECO:0007669"/>
    <property type="project" value="UniProtKB-SubCell"/>
</dbReference>
<dbReference type="GO" id="GO:0004057">
    <property type="term" value="F:arginyl-tRNA--protein transferase activity"/>
    <property type="evidence" value="ECO:0007669"/>
    <property type="project" value="InterPro"/>
</dbReference>
<dbReference type="GO" id="GO:0008914">
    <property type="term" value="F:leucyl-tRNA--protein transferase activity"/>
    <property type="evidence" value="ECO:0007669"/>
    <property type="project" value="UniProtKB-UniRule"/>
</dbReference>
<dbReference type="GO" id="GO:0071596">
    <property type="term" value="P:ubiquitin-dependent protein catabolic process via the N-end rule pathway"/>
    <property type="evidence" value="ECO:0007669"/>
    <property type="project" value="InterPro"/>
</dbReference>
<dbReference type="HAMAP" id="MF_00689">
    <property type="entry name" value="Bpt"/>
    <property type="match status" value="1"/>
</dbReference>
<dbReference type="InterPro" id="IPR016181">
    <property type="entry name" value="Acyl_CoA_acyltransferase"/>
</dbReference>
<dbReference type="InterPro" id="IPR017138">
    <property type="entry name" value="Asp_Glu_LeuTrfase"/>
</dbReference>
<dbReference type="InterPro" id="IPR030700">
    <property type="entry name" value="N-end_Aminoacyl_Trfase"/>
</dbReference>
<dbReference type="InterPro" id="IPR007472">
    <property type="entry name" value="N-end_Aminoacyl_Trfase_C"/>
</dbReference>
<dbReference type="InterPro" id="IPR007471">
    <property type="entry name" value="N-end_Aminoacyl_Trfase_N"/>
</dbReference>
<dbReference type="NCBIfam" id="NF002342">
    <property type="entry name" value="PRK01305.1-3"/>
    <property type="match status" value="1"/>
</dbReference>
<dbReference type="NCBIfam" id="NF002343">
    <property type="entry name" value="PRK01305.1-4"/>
    <property type="match status" value="1"/>
</dbReference>
<dbReference type="NCBIfam" id="NF002346">
    <property type="entry name" value="PRK01305.2-3"/>
    <property type="match status" value="1"/>
</dbReference>
<dbReference type="PANTHER" id="PTHR21367">
    <property type="entry name" value="ARGININE-TRNA-PROTEIN TRANSFERASE 1"/>
    <property type="match status" value="1"/>
</dbReference>
<dbReference type="PANTHER" id="PTHR21367:SF1">
    <property type="entry name" value="ARGINYL-TRNA--PROTEIN TRANSFERASE 1"/>
    <property type="match status" value="1"/>
</dbReference>
<dbReference type="Pfam" id="PF04377">
    <property type="entry name" value="ATE_C"/>
    <property type="match status" value="1"/>
</dbReference>
<dbReference type="Pfam" id="PF04376">
    <property type="entry name" value="ATE_N"/>
    <property type="match status" value="1"/>
</dbReference>
<dbReference type="PIRSF" id="PIRSF037208">
    <property type="entry name" value="ATE_pro_prd"/>
    <property type="match status" value="1"/>
</dbReference>
<dbReference type="SUPFAM" id="SSF55729">
    <property type="entry name" value="Acyl-CoA N-acyltransferases (Nat)"/>
    <property type="match status" value="1"/>
</dbReference>
<feature type="chain" id="PRO_1000045148" description="Aspartate/glutamate leucyltransferase">
    <location>
        <begin position="1"/>
        <end position="258"/>
    </location>
</feature>
<name>BPT_RHOP5</name>
<comment type="function">
    <text evidence="1">Functions in the N-end rule pathway of protein degradation where it conjugates Leu from its aminoacyl-tRNA to the N-termini of proteins containing an N-terminal aspartate or glutamate.</text>
</comment>
<comment type="catalytic activity">
    <reaction evidence="1">
        <text>N-terminal L-glutamyl-[protein] + L-leucyl-tRNA(Leu) = N-terminal L-leucyl-L-glutamyl-[protein] + tRNA(Leu) + H(+)</text>
        <dbReference type="Rhea" id="RHEA:50412"/>
        <dbReference type="Rhea" id="RHEA-COMP:9613"/>
        <dbReference type="Rhea" id="RHEA-COMP:9622"/>
        <dbReference type="Rhea" id="RHEA-COMP:12664"/>
        <dbReference type="Rhea" id="RHEA-COMP:12668"/>
        <dbReference type="ChEBI" id="CHEBI:15378"/>
        <dbReference type="ChEBI" id="CHEBI:64721"/>
        <dbReference type="ChEBI" id="CHEBI:78442"/>
        <dbReference type="ChEBI" id="CHEBI:78494"/>
        <dbReference type="ChEBI" id="CHEBI:133041"/>
        <dbReference type="EC" id="2.3.2.29"/>
    </reaction>
</comment>
<comment type="catalytic activity">
    <reaction evidence="1">
        <text>N-terminal L-aspartyl-[protein] + L-leucyl-tRNA(Leu) = N-terminal L-leucyl-L-aspartyl-[protein] + tRNA(Leu) + H(+)</text>
        <dbReference type="Rhea" id="RHEA:50420"/>
        <dbReference type="Rhea" id="RHEA-COMP:9613"/>
        <dbReference type="Rhea" id="RHEA-COMP:9622"/>
        <dbReference type="Rhea" id="RHEA-COMP:12669"/>
        <dbReference type="Rhea" id="RHEA-COMP:12674"/>
        <dbReference type="ChEBI" id="CHEBI:15378"/>
        <dbReference type="ChEBI" id="CHEBI:64720"/>
        <dbReference type="ChEBI" id="CHEBI:78442"/>
        <dbReference type="ChEBI" id="CHEBI:78494"/>
        <dbReference type="ChEBI" id="CHEBI:133042"/>
        <dbReference type="EC" id="2.3.2.29"/>
    </reaction>
</comment>
<comment type="subcellular location">
    <subcellularLocation>
        <location evidence="1">Cytoplasm</location>
    </subcellularLocation>
</comment>
<comment type="similarity">
    <text evidence="1">Belongs to the R-transferase family. Bpt subfamily.</text>
</comment>
<accession>Q07M86</accession>
<sequence>MTQHSRDTPQFYLTAPSPCPYLPGRQERKVFTHLVGPKAGDLNDLLTHGGFRRSQSIAYRPACDQCRACVSVRVVANEFRPSRAQRKILGRNADVVGELRSPVPTSEQYSVFRAYLDRRHRDGGMADMTVLDYAMMVEDSHVKTRLIEYRRRKLEPGSTGRGEELLAVALTDVLNDGLSMVYSFFEPAEDRRSLGTFMILDHIARARRLGLPYVYLGYWIDGSQKMDYKGRYLPQQRLAPSGWERVGAEDDGLIEPQE</sequence>
<evidence type="ECO:0000255" key="1">
    <source>
        <dbReference type="HAMAP-Rule" id="MF_00689"/>
    </source>
</evidence>
<protein>
    <recommendedName>
        <fullName evidence="1">Aspartate/glutamate leucyltransferase</fullName>
        <ecNumber evidence="1">2.3.2.29</ecNumber>
    </recommendedName>
</protein>
<proteinExistence type="inferred from homology"/>
<organism>
    <name type="scientific">Rhodopseudomonas palustris (strain BisA53)</name>
    <dbReference type="NCBI Taxonomy" id="316055"/>
    <lineage>
        <taxon>Bacteria</taxon>
        <taxon>Pseudomonadati</taxon>
        <taxon>Pseudomonadota</taxon>
        <taxon>Alphaproteobacteria</taxon>
        <taxon>Hyphomicrobiales</taxon>
        <taxon>Nitrobacteraceae</taxon>
        <taxon>Rhodopseudomonas</taxon>
    </lineage>
</organism>
<keyword id="KW-0012">Acyltransferase</keyword>
<keyword id="KW-0963">Cytoplasm</keyword>
<keyword id="KW-0808">Transferase</keyword>
<reference key="1">
    <citation type="submission" date="2006-09" db="EMBL/GenBank/DDBJ databases">
        <title>Complete sequence of Rhodopseudomonas palustris BisA53.</title>
        <authorList>
            <consortium name="US DOE Joint Genome Institute"/>
            <person name="Copeland A."/>
            <person name="Lucas S."/>
            <person name="Lapidus A."/>
            <person name="Barry K."/>
            <person name="Detter J.C."/>
            <person name="Glavina del Rio T."/>
            <person name="Hammon N."/>
            <person name="Israni S."/>
            <person name="Dalin E."/>
            <person name="Tice H."/>
            <person name="Pitluck S."/>
            <person name="Chain P."/>
            <person name="Malfatti S."/>
            <person name="Shin M."/>
            <person name="Vergez L."/>
            <person name="Schmutz J."/>
            <person name="Larimer F."/>
            <person name="Land M."/>
            <person name="Hauser L."/>
            <person name="Pelletier D.A."/>
            <person name="Kyrpides N."/>
            <person name="Kim E."/>
            <person name="Harwood C.S."/>
            <person name="Oda Y."/>
            <person name="Richardson P."/>
        </authorList>
    </citation>
    <scope>NUCLEOTIDE SEQUENCE [LARGE SCALE GENOMIC DNA]</scope>
    <source>
        <strain>BisA53</strain>
    </source>
</reference>